<sequence>MFYDDNADLSIIQRRKVGVIGYGSQGYAHSLSLRDSGVQVRVGLPEGSKSRPKAFEQGLDVDTPAEVAKWADVIMLLVPDTAQADVFENDIEPNLQPGDALFFGHGLNIHFELVKPSGDVTVAMVAPKGPGYLVRRQFVDGKGVPCLIAVNQDPTGTGEALALSYAKAIGGTRAGVIKTTFKDETETDLFGEQAVLCGGTEELVKAGFDVMVEAGYPPEMAYFEVLHELKLIVDLMYEGGIARMNYSVSDTAEFGGYLSGPRVIDADTKERMRGILRDIQDGSFVKKLVANVEGGNKQLEVLRKENAEHPIEVTGKKLRDLMSWVDRQSTETA</sequence>
<proteinExistence type="inferred from homology"/>
<organism>
    <name type="scientific">Mycobacterium leprae (strain TN)</name>
    <dbReference type="NCBI Taxonomy" id="272631"/>
    <lineage>
        <taxon>Bacteria</taxon>
        <taxon>Bacillati</taxon>
        <taxon>Actinomycetota</taxon>
        <taxon>Actinomycetes</taxon>
        <taxon>Mycobacteriales</taxon>
        <taxon>Mycobacteriaceae</taxon>
        <taxon>Mycobacterium</taxon>
    </lineage>
</organism>
<protein>
    <recommendedName>
        <fullName evidence="1">Ketol-acid reductoisomerase (NADP(+))</fullName>
        <shortName evidence="1">KARI</shortName>
        <ecNumber evidence="1">1.1.1.86</ecNumber>
    </recommendedName>
    <alternativeName>
        <fullName evidence="1">Acetohydroxy-acid isomeroreductase</fullName>
        <shortName evidence="1">AHIR</shortName>
    </alternativeName>
    <alternativeName>
        <fullName evidence="1">Alpha-keto-beta-hydroxylacyl reductoisomerase</fullName>
    </alternativeName>
    <alternativeName>
        <fullName evidence="1">Ketol-acid reductoisomerase type 1</fullName>
    </alternativeName>
    <alternativeName>
        <fullName evidence="1">Ketol-acid reductoisomerase type I</fullName>
    </alternativeName>
</protein>
<accession>O33114</accession>
<dbReference type="EC" id="1.1.1.86" evidence="1"/>
<dbReference type="EMBL" id="Z99263">
    <property type="protein sequence ID" value="CAB16437.1"/>
    <property type="status" value="ALT_INIT"/>
    <property type="molecule type" value="Genomic_DNA"/>
</dbReference>
<dbReference type="EMBL" id="AL583923">
    <property type="protein sequence ID" value="CAC30647.1"/>
    <property type="molecule type" value="Genomic_DNA"/>
</dbReference>
<dbReference type="PIR" id="H87120">
    <property type="entry name" value="H87120"/>
</dbReference>
<dbReference type="PIR" id="T45415">
    <property type="entry name" value="T45415"/>
</dbReference>
<dbReference type="RefSeq" id="NP_302164.1">
    <property type="nucleotide sequence ID" value="NC_002677.1"/>
</dbReference>
<dbReference type="RefSeq" id="WP_010908485.1">
    <property type="nucleotide sequence ID" value="NC_002677.1"/>
</dbReference>
<dbReference type="SMR" id="O33114"/>
<dbReference type="STRING" id="272631.gene:17575539"/>
<dbReference type="KEGG" id="mle:ML1694"/>
<dbReference type="PATRIC" id="fig|272631.5.peg.3197"/>
<dbReference type="Leproma" id="ML1694"/>
<dbReference type="eggNOG" id="COG0059">
    <property type="taxonomic scope" value="Bacteria"/>
</dbReference>
<dbReference type="HOGENOM" id="CLU_033821_0_1_11"/>
<dbReference type="OrthoDB" id="9804088at2"/>
<dbReference type="UniPathway" id="UPA00047">
    <property type="reaction ID" value="UER00056"/>
</dbReference>
<dbReference type="UniPathway" id="UPA00049">
    <property type="reaction ID" value="UER00060"/>
</dbReference>
<dbReference type="Proteomes" id="UP000000806">
    <property type="component" value="Chromosome"/>
</dbReference>
<dbReference type="GO" id="GO:0005829">
    <property type="term" value="C:cytosol"/>
    <property type="evidence" value="ECO:0007669"/>
    <property type="project" value="TreeGrafter"/>
</dbReference>
<dbReference type="GO" id="GO:0004455">
    <property type="term" value="F:ketol-acid reductoisomerase activity"/>
    <property type="evidence" value="ECO:0007669"/>
    <property type="project" value="UniProtKB-UniRule"/>
</dbReference>
<dbReference type="GO" id="GO:0000287">
    <property type="term" value="F:magnesium ion binding"/>
    <property type="evidence" value="ECO:0007669"/>
    <property type="project" value="UniProtKB-UniRule"/>
</dbReference>
<dbReference type="GO" id="GO:0050661">
    <property type="term" value="F:NADP binding"/>
    <property type="evidence" value="ECO:0007669"/>
    <property type="project" value="InterPro"/>
</dbReference>
<dbReference type="GO" id="GO:0009097">
    <property type="term" value="P:isoleucine biosynthetic process"/>
    <property type="evidence" value="ECO:0007669"/>
    <property type="project" value="UniProtKB-UniRule"/>
</dbReference>
<dbReference type="GO" id="GO:0009099">
    <property type="term" value="P:L-valine biosynthetic process"/>
    <property type="evidence" value="ECO:0007669"/>
    <property type="project" value="UniProtKB-UniRule"/>
</dbReference>
<dbReference type="FunFam" id="3.40.50.720:FF:000023">
    <property type="entry name" value="Ketol-acid reductoisomerase (NADP(+))"/>
    <property type="match status" value="1"/>
</dbReference>
<dbReference type="Gene3D" id="6.10.240.10">
    <property type="match status" value="1"/>
</dbReference>
<dbReference type="Gene3D" id="3.40.50.720">
    <property type="entry name" value="NAD(P)-binding Rossmann-like Domain"/>
    <property type="match status" value="1"/>
</dbReference>
<dbReference type="HAMAP" id="MF_00435">
    <property type="entry name" value="IlvC"/>
    <property type="match status" value="1"/>
</dbReference>
<dbReference type="InterPro" id="IPR008927">
    <property type="entry name" value="6-PGluconate_DH-like_C_sf"/>
</dbReference>
<dbReference type="InterPro" id="IPR013023">
    <property type="entry name" value="KARI"/>
</dbReference>
<dbReference type="InterPro" id="IPR000506">
    <property type="entry name" value="KARI_C"/>
</dbReference>
<dbReference type="InterPro" id="IPR013116">
    <property type="entry name" value="KARI_N"/>
</dbReference>
<dbReference type="InterPro" id="IPR014359">
    <property type="entry name" value="KARI_prok"/>
</dbReference>
<dbReference type="InterPro" id="IPR036291">
    <property type="entry name" value="NAD(P)-bd_dom_sf"/>
</dbReference>
<dbReference type="NCBIfam" id="TIGR00465">
    <property type="entry name" value="ilvC"/>
    <property type="match status" value="1"/>
</dbReference>
<dbReference type="NCBIfam" id="NF004017">
    <property type="entry name" value="PRK05479.1"/>
    <property type="match status" value="1"/>
</dbReference>
<dbReference type="PANTHER" id="PTHR21371">
    <property type="entry name" value="KETOL-ACID REDUCTOISOMERASE, MITOCHONDRIAL"/>
    <property type="match status" value="1"/>
</dbReference>
<dbReference type="PANTHER" id="PTHR21371:SF1">
    <property type="entry name" value="KETOL-ACID REDUCTOISOMERASE, MITOCHONDRIAL"/>
    <property type="match status" value="1"/>
</dbReference>
<dbReference type="Pfam" id="PF01450">
    <property type="entry name" value="KARI_C"/>
    <property type="match status" value="1"/>
</dbReference>
<dbReference type="Pfam" id="PF07991">
    <property type="entry name" value="KARI_N"/>
    <property type="match status" value="1"/>
</dbReference>
<dbReference type="PIRSF" id="PIRSF000116">
    <property type="entry name" value="IlvC_gammaproteo"/>
    <property type="match status" value="1"/>
</dbReference>
<dbReference type="SUPFAM" id="SSF48179">
    <property type="entry name" value="6-phosphogluconate dehydrogenase C-terminal domain-like"/>
    <property type="match status" value="1"/>
</dbReference>
<dbReference type="SUPFAM" id="SSF51735">
    <property type="entry name" value="NAD(P)-binding Rossmann-fold domains"/>
    <property type="match status" value="1"/>
</dbReference>
<dbReference type="PROSITE" id="PS51851">
    <property type="entry name" value="KARI_C"/>
    <property type="match status" value="1"/>
</dbReference>
<dbReference type="PROSITE" id="PS51850">
    <property type="entry name" value="KARI_N"/>
    <property type="match status" value="1"/>
</dbReference>
<evidence type="ECO:0000255" key="1">
    <source>
        <dbReference type="HAMAP-Rule" id="MF_00435"/>
    </source>
</evidence>
<evidence type="ECO:0000255" key="2">
    <source>
        <dbReference type="PROSITE-ProRule" id="PRU01197"/>
    </source>
</evidence>
<evidence type="ECO:0000255" key="3">
    <source>
        <dbReference type="PROSITE-ProRule" id="PRU01198"/>
    </source>
</evidence>
<evidence type="ECO:0000305" key="4"/>
<comment type="function">
    <text evidence="1">Involved in the biosynthesis of branched-chain amino acids (BCAA). Catalyzes an alkyl-migration followed by a ketol-acid reduction of (S)-2-acetolactate (S2AL) to yield (R)-2,3-dihydroxy-isovalerate. In the isomerase reaction, S2AL is rearranged via a Mg-dependent methyl migration to produce 3-hydroxy-3-methyl-2-ketobutyrate (HMKB). In the reductase reaction, this 2-ketoacid undergoes a metal-dependent reduction by NADPH to yield (R)-2,3-dihydroxy-isovalerate.</text>
</comment>
<comment type="catalytic activity">
    <reaction evidence="1">
        <text>(2R)-2,3-dihydroxy-3-methylbutanoate + NADP(+) = (2S)-2-acetolactate + NADPH + H(+)</text>
        <dbReference type="Rhea" id="RHEA:22068"/>
        <dbReference type="ChEBI" id="CHEBI:15378"/>
        <dbReference type="ChEBI" id="CHEBI:49072"/>
        <dbReference type="ChEBI" id="CHEBI:57783"/>
        <dbReference type="ChEBI" id="CHEBI:58349"/>
        <dbReference type="ChEBI" id="CHEBI:58476"/>
        <dbReference type="EC" id="1.1.1.86"/>
    </reaction>
</comment>
<comment type="catalytic activity">
    <reaction evidence="1">
        <text>(2R,3R)-2,3-dihydroxy-3-methylpentanoate + NADP(+) = (S)-2-ethyl-2-hydroxy-3-oxobutanoate + NADPH + H(+)</text>
        <dbReference type="Rhea" id="RHEA:13493"/>
        <dbReference type="ChEBI" id="CHEBI:15378"/>
        <dbReference type="ChEBI" id="CHEBI:49256"/>
        <dbReference type="ChEBI" id="CHEBI:49258"/>
        <dbReference type="ChEBI" id="CHEBI:57783"/>
        <dbReference type="ChEBI" id="CHEBI:58349"/>
        <dbReference type="EC" id="1.1.1.86"/>
    </reaction>
</comment>
<comment type="cofactor">
    <cofactor evidence="1">
        <name>Mg(2+)</name>
        <dbReference type="ChEBI" id="CHEBI:18420"/>
    </cofactor>
    <text evidence="1">Binds 2 magnesium ions per subunit.</text>
</comment>
<comment type="pathway">
    <text evidence="1">Amino-acid biosynthesis; L-isoleucine biosynthesis; L-isoleucine from 2-oxobutanoate: step 2/4.</text>
</comment>
<comment type="pathway">
    <text evidence="1">Amino-acid biosynthesis; L-valine biosynthesis; L-valine from pyruvate: step 2/4.</text>
</comment>
<comment type="similarity">
    <text evidence="1">Belongs to the ketol-acid reductoisomerase family.</text>
</comment>
<comment type="sequence caution" evidence="4">
    <conflict type="erroneous initiation">
        <sequence resource="EMBL-CDS" id="CAB16437"/>
    </conflict>
</comment>
<gene>
    <name evidence="1" type="primary">ilvC</name>
    <name type="ordered locus">ML1694</name>
    <name type="ORF">MLCB637.22</name>
</gene>
<keyword id="KW-0028">Amino-acid biosynthesis</keyword>
<keyword id="KW-0100">Branched-chain amino acid biosynthesis</keyword>
<keyword id="KW-0460">Magnesium</keyword>
<keyword id="KW-0479">Metal-binding</keyword>
<keyword id="KW-0521">NADP</keyword>
<keyword id="KW-0560">Oxidoreductase</keyword>
<keyword id="KW-1185">Reference proteome</keyword>
<feature type="chain" id="PRO_0000151327" description="Ketol-acid reductoisomerase (NADP(+))">
    <location>
        <begin position="1"/>
        <end position="333"/>
    </location>
</feature>
<feature type="domain" description="KARI N-terminal Rossmann" evidence="2">
    <location>
        <begin position="1"/>
        <end position="179"/>
    </location>
</feature>
<feature type="domain" description="KARI C-terminal knotted" evidence="3">
    <location>
        <begin position="180"/>
        <end position="325"/>
    </location>
</feature>
<feature type="active site" evidence="1">
    <location>
        <position position="105"/>
    </location>
</feature>
<feature type="binding site" evidence="1">
    <location>
        <begin position="22"/>
        <end position="25"/>
    </location>
    <ligand>
        <name>NADP(+)</name>
        <dbReference type="ChEBI" id="CHEBI:58349"/>
    </ligand>
</feature>
<feature type="binding site" evidence="1">
    <location>
        <position position="48"/>
    </location>
    <ligand>
        <name>NADP(+)</name>
        <dbReference type="ChEBI" id="CHEBI:58349"/>
    </ligand>
</feature>
<feature type="binding site" evidence="1">
    <location>
        <position position="50"/>
    </location>
    <ligand>
        <name>NADP(+)</name>
        <dbReference type="ChEBI" id="CHEBI:58349"/>
    </ligand>
</feature>
<feature type="binding site" evidence="1">
    <location>
        <begin position="80"/>
        <end position="83"/>
    </location>
    <ligand>
        <name>NADP(+)</name>
        <dbReference type="ChEBI" id="CHEBI:58349"/>
    </ligand>
</feature>
<feature type="binding site" evidence="1">
    <location>
        <position position="131"/>
    </location>
    <ligand>
        <name>NADP(+)</name>
        <dbReference type="ChEBI" id="CHEBI:58349"/>
    </ligand>
</feature>
<feature type="binding site" evidence="1">
    <location>
        <position position="188"/>
    </location>
    <ligand>
        <name>Mg(2+)</name>
        <dbReference type="ChEBI" id="CHEBI:18420"/>
        <label>1</label>
    </ligand>
</feature>
<feature type="binding site" evidence="1">
    <location>
        <position position="188"/>
    </location>
    <ligand>
        <name>Mg(2+)</name>
        <dbReference type="ChEBI" id="CHEBI:18420"/>
        <label>2</label>
    </ligand>
</feature>
<feature type="binding site" evidence="1">
    <location>
        <position position="192"/>
    </location>
    <ligand>
        <name>Mg(2+)</name>
        <dbReference type="ChEBI" id="CHEBI:18420"/>
        <label>1</label>
    </ligand>
</feature>
<feature type="binding site" evidence="1">
    <location>
        <position position="224"/>
    </location>
    <ligand>
        <name>Mg(2+)</name>
        <dbReference type="ChEBI" id="CHEBI:18420"/>
        <label>2</label>
    </ligand>
</feature>
<feature type="binding site" evidence="1">
    <location>
        <position position="228"/>
    </location>
    <ligand>
        <name>Mg(2+)</name>
        <dbReference type="ChEBI" id="CHEBI:18420"/>
        <label>2</label>
    </ligand>
</feature>
<feature type="binding site" evidence="1">
    <location>
        <position position="249"/>
    </location>
    <ligand>
        <name>substrate</name>
    </ligand>
</feature>
<reference key="1">
    <citation type="journal article" date="2001" name="Nature">
        <title>Massive gene decay in the leprosy bacillus.</title>
        <authorList>
            <person name="Cole S.T."/>
            <person name="Eiglmeier K."/>
            <person name="Parkhill J."/>
            <person name="James K.D."/>
            <person name="Thomson N.R."/>
            <person name="Wheeler P.R."/>
            <person name="Honore N."/>
            <person name="Garnier T."/>
            <person name="Churcher C.M."/>
            <person name="Harris D.E."/>
            <person name="Mungall K.L."/>
            <person name="Basham D."/>
            <person name="Brown D."/>
            <person name="Chillingworth T."/>
            <person name="Connor R."/>
            <person name="Davies R.M."/>
            <person name="Devlin K."/>
            <person name="Duthoy S."/>
            <person name="Feltwell T."/>
            <person name="Fraser A."/>
            <person name="Hamlin N."/>
            <person name="Holroyd S."/>
            <person name="Hornsby T."/>
            <person name="Jagels K."/>
            <person name="Lacroix C."/>
            <person name="Maclean J."/>
            <person name="Moule S."/>
            <person name="Murphy L.D."/>
            <person name="Oliver K."/>
            <person name="Quail M.A."/>
            <person name="Rajandream M.A."/>
            <person name="Rutherford K.M."/>
            <person name="Rutter S."/>
            <person name="Seeger K."/>
            <person name="Simon S."/>
            <person name="Simmonds M."/>
            <person name="Skelton J."/>
            <person name="Squares R."/>
            <person name="Squares S."/>
            <person name="Stevens K."/>
            <person name="Taylor K."/>
            <person name="Whitehead S."/>
            <person name="Woodward J.R."/>
            <person name="Barrell B.G."/>
        </authorList>
    </citation>
    <scope>NUCLEOTIDE SEQUENCE [LARGE SCALE GENOMIC DNA]</scope>
    <source>
        <strain>TN</strain>
    </source>
</reference>
<name>ILVC_MYCLE</name>